<name>RS13_LACGA</name>
<comment type="function">
    <text evidence="1">Located at the top of the head of the 30S subunit, it contacts several helices of the 16S rRNA. In the 70S ribosome it contacts the 23S rRNA (bridge B1a) and protein L5 of the 50S subunit (bridge B1b), connecting the 2 subunits; these bridges are implicated in subunit movement. Contacts the tRNAs in the A and P-sites.</text>
</comment>
<comment type="subunit">
    <text evidence="1">Part of the 30S ribosomal subunit. Forms a loose heterodimer with protein S19. Forms two bridges to the 50S subunit in the 70S ribosome.</text>
</comment>
<comment type="similarity">
    <text evidence="1">Belongs to the universal ribosomal protein uS13 family.</text>
</comment>
<proteinExistence type="inferred from homology"/>
<organism>
    <name type="scientific">Lactobacillus gasseri (strain ATCC 33323 / DSM 20243 / BCRC 14619 / CIP 102991 / JCM 1131 / KCTC 3163 / NCIMB 11718 / NCTC 13722 / AM63)</name>
    <dbReference type="NCBI Taxonomy" id="324831"/>
    <lineage>
        <taxon>Bacteria</taxon>
        <taxon>Bacillati</taxon>
        <taxon>Bacillota</taxon>
        <taxon>Bacilli</taxon>
        <taxon>Lactobacillales</taxon>
        <taxon>Lactobacillaceae</taxon>
        <taxon>Lactobacillus</taxon>
    </lineage>
</organism>
<protein>
    <recommendedName>
        <fullName evidence="1">Small ribosomal subunit protein uS13</fullName>
    </recommendedName>
    <alternativeName>
        <fullName evidence="3">30S ribosomal protein S13</fullName>
    </alternativeName>
</protein>
<accession>Q046A2</accession>
<sequence length="115" mass="13130">MARIAGVDLPRNKRVVVALTYIYGIGEPTAKKICKDAGISEDIRTNDLTPEDQEKLRSEVDKYRVEGDLRREVSLNIKRLVEIGSYRGIRHRRGLPVRGQNTKNNARTRKGSKRK</sequence>
<dbReference type="EMBL" id="CP000413">
    <property type="protein sequence ID" value="ABJ59720.1"/>
    <property type="molecule type" value="Genomic_DNA"/>
</dbReference>
<dbReference type="RefSeq" id="WP_003647814.1">
    <property type="nucleotide sequence ID" value="NZ_WBMG01000001.1"/>
</dbReference>
<dbReference type="SMR" id="Q046A2"/>
<dbReference type="GeneID" id="83569778"/>
<dbReference type="KEGG" id="lga:LGAS_0314"/>
<dbReference type="HOGENOM" id="CLU_103849_1_1_9"/>
<dbReference type="BioCyc" id="LGAS324831:G1G6Y-313-MONOMER"/>
<dbReference type="Proteomes" id="UP000000664">
    <property type="component" value="Chromosome"/>
</dbReference>
<dbReference type="GO" id="GO:0005829">
    <property type="term" value="C:cytosol"/>
    <property type="evidence" value="ECO:0007669"/>
    <property type="project" value="TreeGrafter"/>
</dbReference>
<dbReference type="GO" id="GO:0015935">
    <property type="term" value="C:small ribosomal subunit"/>
    <property type="evidence" value="ECO:0007669"/>
    <property type="project" value="TreeGrafter"/>
</dbReference>
<dbReference type="GO" id="GO:0019843">
    <property type="term" value="F:rRNA binding"/>
    <property type="evidence" value="ECO:0007669"/>
    <property type="project" value="UniProtKB-UniRule"/>
</dbReference>
<dbReference type="GO" id="GO:0003735">
    <property type="term" value="F:structural constituent of ribosome"/>
    <property type="evidence" value="ECO:0007669"/>
    <property type="project" value="InterPro"/>
</dbReference>
<dbReference type="GO" id="GO:0000049">
    <property type="term" value="F:tRNA binding"/>
    <property type="evidence" value="ECO:0007669"/>
    <property type="project" value="UniProtKB-UniRule"/>
</dbReference>
<dbReference type="GO" id="GO:0006412">
    <property type="term" value="P:translation"/>
    <property type="evidence" value="ECO:0007669"/>
    <property type="project" value="UniProtKB-UniRule"/>
</dbReference>
<dbReference type="FunFam" id="1.10.8.50:FF:000001">
    <property type="entry name" value="30S ribosomal protein S13"/>
    <property type="match status" value="1"/>
</dbReference>
<dbReference type="FunFam" id="4.10.910.10:FF:000001">
    <property type="entry name" value="30S ribosomal protein S13"/>
    <property type="match status" value="1"/>
</dbReference>
<dbReference type="Gene3D" id="1.10.8.50">
    <property type="match status" value="1"/>
</dbReference>
<dbReference type="Gene3D" id="4.10.910.10">
    <property type="entry name" value="30s ribosomal protein s13, domain 2"/>
    <property type="match status" value="1"/>
</dbReference>
<dbReference type="HAMAP" id="MF_01315">
    <property type="entry name" value="Ribosomal_uS13"/>
    <property type="match status" value="1"/>
</dbReference>
<dbReference type="InterPro" id="IPR027437">
    <property type="entry name" value="Rbsml_uS13_C"/>
</dbReference>
<dbReference type="InterPro" id="IPR001892">
    <property type="entry name" value="Ribosomal_uS13"/>
</dbReference>
<dbReference type="InterPro" id="IPR010979">
    <property type="entry name" value="Ribosomal_uS13-like_H2TH"/>
</dbReference>
<dbReference type="InterPro" id="IPR019980">
    <property type="entry name" value="Ribosomal_uS13_bac-type"/>
</dbReference>
<dbReference type="InterPro" id="IPR018269">
    <property type="entry name" value="Ribosomal_uS13_CS"/>
</dbReference>
<dbReference type="NCBIfam" id="TIGR03631">
    <property type="entry name" value="uS13_bact"/>
    <property type="match status" value="1"/>
</dbReference>
<dbReference type="PANTHER" id="PTHR10871">
    <property type="entry name" value="30S RIBOSOMAL PROTEIN S13/40S RIBOSOMAL PROTEIN S18"/>
    <property type="match status" value="1"/>
</dbReference>
<dbReference type="PANTHER" id="PTHR10871:SF1">
    <property type="entry name" value="SMALL RIBOSOMAL SUBUNIT PROTEIN US13M"/>
    <property type="match status" value="1"/>
</dbReference>
<dbReference type="Pfam" id="PF00416">
    <property type="entry name" value="Ribosomal_S13"/>
    <property type="match status" value="1"/>
</dbReference>
<dbReference type="PIRSF" id="PIRSF002134">
    <property type="entry name" value="Ribosomal_S13"/>
    <property type="match status" value="1"/>
</dbReference>
<dbReference type="SUPFAM" id="SSF46946">
    <property type="entry name" value="S13-like H2TH domain"/>
    <property type="match status" value="1"/>
</dbReference>
<dbReference type="PROSITE" id="PS00646">
    <property type="entry name" value="RIBOSOMAL_S13_1"/>
    <property type="match status" value="1"/>
</dbReference>
<dbReference type="PROSITE" id="PS50159">
    <property type="entry name" value="RIBOSOMAL_S13_2"/>
    <property type="match status" value="1"/>
</dbReference>
<keyword id="KW-0687">Ribonucleoprotein</keyword>
<keyword id="KW-0689">Ribosomal protein</keyword>
<keyword id="KW-0694">RNA-binding</keyword>
<keyword id="KW-0699">rRNA-binding</keyword>
<keyword id="KW-0820">tRNA-binding</keyword>
<evidence type="ECO:0000255" key="1">
    <source>
        <dbReference type="HAMAP-Rule" id="MF_01315"/>
    </source>
</evidence>
<evidence type="ECO:0000256" key="2">
    <source>
        <dbReference type="SAM" id="MobiDB-lite"/>
    </source>
</evidence>
<evidence type="ECO:0000305" key="3"/>
<gene>
    <name evidence="1" type="primary">rpsM</name>
    <name type="ordered locus">LGAS_0314</name>
</gene>
<feature type="chain" id="PRO_0000306629" description="Small ribosomal subunit protein uS13">
    <location>
        <begin position="1"/>
        <end position="115"/>
    </location>
</feature>
<feature type="region of interest" description="Disordered" evidence="2">
    <location>
        <begin position="92"/>
        <end position="115"/>
    </location>
</feature>
<feature type="compositionally biased region" description="Basic residues" evidence="2">
    <location>
        <begin position="106"/>
        <end position="115"/>
    </location>
</feature>
<reference key="1">
    <citation type="journal article" date="2006" name="Proc. Natl. Acad. Sci. U.S.A.">
        <title>Comparative genomics of the lactic acid bacteria.</title>
        <authorList>
            <person name="Makarova K.S."/>
            <person name="Slesarev A."/>
            <person name="Wolf Y.I."/>
            <person name="Sorokin A."/>
            <person name="Mirkin B."/>
            <person name="Koonin E.V."/>
            <person name="Pavlov A."/>
            <person name="Pavlova N."/>
            <person name="Karamychev V."/>
            <person name="Polouchine N."/>
            <person name="Shakhova V."/>
            <person name="Grigoriev I."/>
            <person name="Lou Y."/>
            <person name="Rohksar D."/>
            <person name="Lucas S."/>
            <person name="Huang K."/>
            <person name="Goodstein D.M."/>
            <person name="Hawkins T."/>
            <person name="Plengvidhya V."/>
            <person name="Welker D."/>
            <person name="Hughes J."/>
            <person name="Goh Y."/>
            <person name="Benson A."/>
            <person name="Baldwin K."/>
            <person name="Lee J.-H."/>
            <person name="Diaz-Muniz I."/>
            <person name="Dosti B."/>
            <person name="Smeianov V."/>
            <person name="Wechter W."/>
            <person name="Barabote R."/>
            <person name="Lorca G."/>
            <person name="Altermann E."/>
            <person name="Barrangou R."/>
            <person name="Ganesan B."/>
            <person name="Xie Y."/>
            <person name="Rawsthorne H."/>
            <person name="Tamir D."/>
            <person name="Parker C."/>
            <person name="Breidt F."/>
            <person name="Broadbent J.R."/>
            <person name="Hutkins R."/>
            <person name="O'Sullivan D."/>
            <person name="Steele J."/>
            <person name="Unlu G."/>
            <person name="Saier M.H. Jr."/>
            <person name="Klaenhammer T."/>
            <person name="Richardson P."/>
            <person name="Kozyavkin S."/>
            <person name="Weimer B.C."/>
            <person name="Mills D.A."/>
        </authorList>
    </citation>
    <scope>NUCLEOTIDE SEQUENCE [LARGE SCALE GENOMIC DNA]</scope>
    <source>
        <strain>ATCC 33323 / DSM 20243 / BCRC 14619 / CIP 102991 / JCM 1131 / KCTC 3163 / NCIMB 11718 / NCTC 13722 / AM63</strain>
    </source>
</reference>